<gene>
    <name type="primary">hoxb7-a</name>
    <name type="synonym">hbox2-a</name>
</gene>
<organism>
    <name type="scientific">Xenopus laevis</name>
    <name type="common">African clawed frog</name>
    <dbReference type="NCBI Taxonomy" id="8355"/>
    <lineage>
        <taxon>Eukaryota</taxon>
        <taxon>Metazoa</taxon>
        <taxon>Chordata</taxon>
        <taxon>Craniata</taxon>
        <taxon>Vertebrata</taxon>
        <taxon>Euteleostomi</taxon>
        <taxon>Amphibia</taxon>
        <taxon>Batrachia</taxon>
        <taxon>Anura</taxon>
        <taxon>Pipoidea</taxon>
        <taxon>Pipidae</taxon>
        <taxon>Xenopodinae</taxon>
        <taxon>Xenopus</taxon>
        <taxon>Xenopus</taxon>
    </lineage>
</organism>
<proteinExistence type="evidence at transcript level"/>
<feature type="chain" id="PRO_0000200146" description="Homeobox protein Hox-B7-A">
    <location>
        <begin position="1"/>
        <end position="220"/>
    </location>
</feature>
<feature type="DNA-binding region" description="Homeobox" evidence="1">
    <location>
        <begin position="140"/>
        <end position="199"/>
    </location>
</feature>
<feature type="region of interest" description="Disordered" evidence="2">
    <location>
        <begin position="197"/>
        <end position="220"/>
    </location>
</feature>
<feature type="short sequence motif" description="Antp-type hexapeptide">
    <location>
        <begin position="129"/>
        <end position="134"/>
    </location>
</feature>
<feature type="sequence conflict" description="In Ref. 3; AAA49749." evidence="3" ref="3">
    <original>MRS</original>
    <variation>LSL</variation>
    <location>
        <begin position="133"/>
        <end position="135"/>
    </location>
</feature>
<name>HXB7A_XENLA</name>
<evidence type="ECO:0000255" key="1">
    <source>
        <dbReference type="PROSITE-ProRule" id="PRU00108"/>
    </source>
</evidence>
<evidence type="ECO:0000256" key="2">
    <source>
        <dbReference type="SAM" id="MobiDB-lite"/>
    </source>
</evidence>
<evidence type="ECO:0000305" key="3"/>
<reference key="1">
    <citation type="journal article" date="1989" name="Dev. Biol.">
        <title>Duplicated homeobox genes in Xenopus.</title>
        <authorList>
            <person name="Fritz A.F."/>
            <person name="Cho K.W.Y."/>
            <person name="Wright C.V.E."/>
            <person name="Jegalian B.G."/>
            <person name="De Robertis E.M."/>
        </authorList>
    </citation>
    <scope>NUCLEOTIDE SEQUENCE [MRNA]</scope>
</reference>
<reference key="2">
    <citation type="submission" date="2004-07" db="EMBL/GenBank/DDBJ databases">
        <authorList>
            <consortium name="NIH - Xenopus Gene Collection (XGC) project"/>
        </authorList>
    </citation>
    <scope>NUCLEOTIDE SEQUENCE [LARGE SCALE MRNA]</scope>
    <source>
        <tissue>Embryo</tissue>
    </source>
</reference>
<reference key="3">
    <citation type="journal article" date="1984" name="Cell">
        <title>A homeo-box-containing gene expressed during oogenesis in Xenopus.</title>
        <authorList>
            <person name="Mueller M.M."/>
            <person name="Carrasco A.E."/>
            <person name="De Robertis E.M."/>
        </authorList>
    </citation>
    <scope>NUCLEOTIDE SEQUENCE [GENOMIC DNA] OF 133-220</scope>
</reference>
<sequence>MSSLYYANALFSKYPTATSVFSSGVFPEQTSCAFASNPQRSGYGSSPGGTFPAGSAAHGLYSNGSSLHPQSPAMYPSSYGLDAASFNMHCSPFEQNLSSLMCAGDPTKQNSAKAEQRESELHNEANLRIYPWMRSAGADRKRGRQTYTRYQTLELEKEFHFNRYLTRRRRIEIAHVLCLTERQIKIWFQNRRMKWKKENKASSPSSNSQEKQETEEEEEE</sequence>
<protein>
    <recommendedName>
        <fullName>Homeobox protein Hox-B7-A</fullName>
    </recommendedName>
    <alternativeName>
        <fullName>MM3</fullName>
    </alternativeName>
    <alternativeName>
        <fullName>XlHbox-2 A</fullName>
    </alternativeName>
</protein>
<accession>Q91771</accession>
<accession>Q6DCN5</accession>
<comment type="function">
    <text>Sequence-specific transcription factor which is part of a developmental regulatory system that provides cells with specific positional identities on the anterior-posterior axis.</text>
</comment>
<comment type="subcellular location">
    <subcellularLocation>
        <location>Nucleus</location>
    </subcellularLocation>
</comment>
<comment type="developmental stage">
    <text>Maternally expressed in oocytes.</text>
</comment>
<comment type="similarity">
    <text evidence="3">Belongs to the Antp homeobox family.</text>
</comment>
<dbReference type="EMBL" id="M23916">
    <property type="protein sequence ID" value="AAA49754.1"/>
    <property type="molecule type" value="mRNA"/>
</dbReference>
<dbReference type="EMBL" id="BC077970">
    <property type="protein sequence ID" value="AAH77970.1"/>
    <property type="molecule type" value="mRNA"/>
</dbReference>
<dbReference type="EMBL" id="K02616">
    <property type="protein sequence ID" value="AAA49749.1"/>
    <property type="molecule type" value="Genomic_DNA"/>
</dbReference>
<dbReference type="PIR" id="A03317">
    <property type="entry name" value="A03317"/>
</dbReference>
<dbReference type="PIR" id="A37371">
    <property type="entry name" value="A37371"/>
</dbReference>
<dbReference type="RefSeq" id="NP_001079110.1">
    <property type="nucleotide sequence ID" value="NM_001085641.1"/>
</dbReference>
<dbReference type="SMR" id="Q91771"/>
<dbReference type="DNASU" id="373643"/>
<dbReference type="GeneID" id="373643"/>
<dbReference type="KEGG" id="xla:373643"/>
<dbReference type="AGR" id="Xenbase:XB-GENE-5959297"/>
<dbReference type="CTD" id="373643"/>
<dbReference type="Xenbase" id="XB-GENE-5959297">
    <property type="gene designation" value="hoxb7.S"/>
</dbReference>
<dbReference type="OMA" id="QNCNKTD"/>
<dbReference type="OrthoDB" id="6159439at2759"/>
<dbReference type="Proteomes" id="UP000186698">
    <property type="component" value="Chromosome 9_10S"/>
</dbReference>
<dbReference type="Bgee" id="373643">
    <property type="expression patterns" value="Expressed in neurula embryo and 9 other cell types or tissues"/>
</dbReference>
<dbReference type="GO" id="GO:0005634">
    <property type="term" value="C:nucleus"/>
    <property type="evidence" value="ECO:0000318"/>
    <property type="project" value="GO_Central"/>
</dbReference>
<dbReference type="GO" id="GO:0000981">
    <property type="term" value="F:DNA-binding transcription factor activity, RNA polymerase II-specific"/>
    <property type="evidence" value="ECO:0000318"/>
    <property type="project" value="GO_Central"/>
</dbReference>
<dbReference type="GO" id="GO:0000978">
    <property type="term" value="F:RNA polymerase II cis-regulatory region sequence-specific DNA binding"/>
    <property type="evidence" value="ECO:0007669"/>
    <property type="project" value="TreeGrafter"/>
</dbReference>
<dbReference type="GO" id="GO:0000977">
    <property type="term" value="F:RNA polymerase II transcription regulatory region sequence-specific DNA binding"/>
    <property type="evidence" value="ECO:0000318"/>
    <property type="project" value="GO_Central"/>
</dbReference>
<dbReference type="GO" id="GO:0009952">
    <property type="term" value="P:anterior/posterior pattern specification"/>
    <property type="evidence" value="ECO:0007669"/>
    <property type="project" value="TreeGrafter"/>
</dbReference>
<dbReference type="GO" id="GO:0006357">
    <property type="term" value="P:regulation of transcription by RNA polymerase II"/>
    <property type="evidence" value="ECO:0000318"/>
    <property type="project" value="GO_Central"/>
</dbReference>
<dbReference type="CDD" id="cd00086">
    <property type="entry name" value="homeodomain"/>
    <property type="match status" value="1"/>
</dbReference>
<dbReference type="FunFam" id="1.10.10.60:FF:000017">
    <property type="entry name" value="Homeobox protein antennapedia"/>
    <property type="match status" value="1"/>
</dbReference>
<dbReference type="Gene3D" id="1.10.10.60">
    <property type="entry name" value="Homeodomain-like"/>
    <property type="match status" value="1"/>
</dbReference>
<dbReference type="InterPro" id="IPR050296">
    <property type="entry name" value="Antp_homeobox"/>
</dbReference>
<dbReference type="InterPro" id="IPR001356">
    <property type="entry name" value="HD"/>
</dbReference>
<dbReference type="InterPro" id="IPR020479">
    <property type="entry name" value="HD_metazoa"/>
</dbReference>
<dbReference type="InterPro" id="IPR017995">
    <property type="entry name" value="Homeobox_antennapedia"/>
</dbReference>
<dbReference type="InterPro" id="IPR001827">
    <property type="entry name" value="Homeobox_Antennapedia_CS"/>
</dbReference>
<dbReference type="InterPro" id="IPR017970">
    <property type="entry name" value="Homeobox_CS"/>
</dbReference>
<dbReference type="InterPro" id="IPR009057">
    <property type="entry name" value="Homeodomain-like_sf"/>
</dbReference>
<dbReference type="PANTHER" id="PTHR45659">
    <property type="entry name" value="HOMEOBOX PROTEIN HOX"/>
    <property type="match status" value="1"/>
</dbReference>
<dbReference type="PANTHER" id="PTHR45659:SF11">
    <property type="entry name" value="HOMEOBOX PROTEIN HOX-B7"/>
    <property type="match status" value="1"/>
</dbReference>
<dbReference type="Pfam" id="PF00046">
    <property type="entry name" value="Homeodomain"/>
    <property type="match status" value="1"/>
</dbReference>
<dbReference type="PRINTS" id="PR00025">
    <property type="entry name" value="ANTENNAPEDIA"/>
</dbReference>
<dbReference type="PRINTS" id="PR00024">
    <property type="entry name" value="HOMEOBOX"/>
</dbReference>
<dbReference type="SMART" id="SM00389">
    <property type="entry name" value="HOX"/>
    <property type="match status" value="1"/>
</dbReference>
<dbReference type="SUPFAM" id="SSF46689">
    <property type="entry name" value="Homeodomain-like"/>
    <property type="match status" value="1"/>
</dbReference>
<dbReference type="PROSITE" id="PS00032">
    <property type="entry name" value="ANTENNAPEDIA"/>
    <property type="match status" value="1"/>
</dbReference>
<dbReference type="PROSITE" id="PS00027">
    <property type="entry name" value="HOMEOBOX_1"/>
    <property type="match status" value="1"/>
</dbReference>
<dbReference type="PROSITE" id="PS50071">
    <property type="entry name" value="HOMEOBOX_2"/>
    <property type="match status" value="1"/>
</dbReference>
<keyword id="KW-0217">Developmental protein</keyword>
<keyword id="KW-0238">DNA-binding</keyword>
<keyword id="KW-0371">Homeobox</keyword>
<keyword id="KW-0539">Nucleus</keyword>
<keyword id="KW-1185">Reference proteome</keyword>
<keyword id="KW-0804">Transcription</keyword>
<keyword id="KW-0805">Transcription regulation</keyword>